<comment type="catalytic activity">
    <reaction>
        <text>L-seryl-[protein] + ATP = O-phospho-L-seryl-[protein] + ADP + H(+)</text>
        <dbReference type="Rhea" id="RHEA:17989"/>
        <dbReference type="Rhea" id="RHEA-COMP:9863"/>
        <dbReference type="Rhea" id="RHEA-COMP:11604"/>
        <dbReference type="ChEBI" id="CHEBI:15378"/>
        <dbReference type="ChEBI" id="CHEBI:29999"/>
        <dbReference type="ChEBI" id="CHEBI:30616"/>
        <dbReference type="ChEBI" id="CHEBI:83421"/>
        <dbReference type="ChEBI" id="CHEBI:456216"/>
        <dbReference type="EC" id="2.7.11.1"/>
    </reaction>
</comment>
<comment type="catalytic activity">
    <reaction>
        <text>L-threonyl-[protein] + ATP = O-phospho-L-threonyl-[protein] + ADP + H(+)</text>
        <dbReference type="Rhea" id="RHEA:46608"/>
        <dbReference type="Rhea" id="RHEA-COMP:11060"/>
        <dbReference type="Rhea" id="RHEA-COMP:11605"/>
        <dbReference type="ChEBI" id="CHEBI:15378"/>
        <dbReference type="ChEBI" id="CHEBI:30013"/>
        <dbReference type="ChEBI" id="CHEBI:30616"/>
        <dbReference type="ChEBI" id="CHEBI:61977"/>
        <dbReference type="ChEBI" id="CHEBI:456216"/>
        <dbReference type="EC" id="2.7.11.1"/>
    </reaction>
</comment>
<comment type="similarity">
    <text evidence="5">Belongs to the protein kinase superfamily. TKL Ser/Thr protein kinase family.</text>
</comment>
<protein>
    <recommendedName>
        <fullName>Probable serine/threonine-protein kinase DDB_G0267686</fullName>
        <ecNumber>2.7.11.1</ecNumber>
    </recommendedName>
</protein>
<evidence type="ECO:0000255" key="1">
    <source>
        <dbReference type="PROSITE-ProRule" id="PRU00159"/>
    </source>
</evidence>
<evidence type="ECO:0000255" key="2">
    <source>
        <dbReference type="PROSITE-ProRule" id="PRU00171"/>
    </source>
</evidence>
<evidence type="ECO:0000255" key="3">
    <source>
        <dbReference type="PROSITE-ProRule" id="PRU10027"/>
    </source>
</evidence>
<evidence type="ECO:0000256" key="4">
    <source>
        <dbReference type="SAM" id="MobiDB-lite"/>
    </source>
</evidence>
<evidence type="ECO:0000305" key="5"/>
<proteinExistence type="inferred from homology"/>
<gene>
    <name type="ORF">DDB_G0267686</name>
</gene>
<dbReference type="EC" id="2.7.11.1"/>
<dbReference type="EMBL" id="AAFI02000003">
    <property type="protein sequence ID" value="EAL73296.1"/>
    <property type="molecule type" value="Genomic_DNA"/>
</dbReference>
<dbReference type="RefSeq" id="XP_647220.1">
    <property type="nucleotide sequence ID" value="XM_642128.1"/>
</dbReference>
<dbReference type="SMR" id="Q55GG4"/>
<dbReference type="FunCoup" id="Q55GG4">
    <property type="interactions" value="466"/>
</dbReference>
<dbReference type="GlyGen" id="Q55GG4">
    <property type="glycosylation" value="3 sites"/>
</dbReference>
<dbReference type="PaxDb" id="44689-DDB0229847"/>
<dbReference type="EnsemblProtists" id="EAL73296">
    <property type="protein sequence ID" value="EAL73296"/>
    <property type="gene ID" value="DDB_G0267686"/>
</dbReference>
<dbReference type="GeneID" id="8616024"/>
<dbReference type="KEGG" id="ddi:DDB_G0267686"/>
<dbReference type="dictyBase" id="DDB_G0267686"/>
<dbReference type="VEuPathDB" id="AmoebaDB:DDB_G0267686"/>
<dbReference type="eggNOG" id="KOG0192">
    <property type="taxonomic scope" value="Eukaryota"/>
</dbReference>
<dbReference type="HOGENOM" id="CLU_230907_0_0_1"/>
<dbReference type="InParanoid" id="Q55GG4"/>
<dbReference type="OMA" id="NCGHYPA"/>
<dbReference type="Reactome" id="R-DDI-5673000">
    <property type="pathway name" value="RAF activation"/>
</dbReference>
<dbReference type="Reactome" id="R-DDI-5675221">
    <property type="pathway name" value="Negative regulation of MAPK pathway"/>
</dbReference>
<dbReference type="PRO" id="PR:Q55GG4"/>
<dbReference type="Proteomes" id="UP000002195">
    <property type="component" value="Chromosome 1"/>
</dbReference>
<dbReference type="GO" id="GO:0005737">
    <property type="term" value="C:cytoplasm"/>
    <property type="evidence" value="ECO:0000318"/>
    <property type="project" value="GO_Central"/>
</dbReference>
<dbReference type="GO" id="GO:0005524">
    <property type="term" value="F:ATP binding"/>
    <property type="evidence" value="ECO:0007669"/>
    <property type="project" value="UniProtKB-KW"/>
</dbReference>
<dbReference type="GO" id="GO:0004672">
    <property type="term" value="F:protein kinase activity"/>
    <property type="evidence" value="ECO:0000318"/>
    <property type="project" value="GO_Central"/>
</dbReference>
<dbReference type="GO" id="GO:0106310">
    <property type="term" value="F:protein serine kinase activity"/>
    <property type="evidence" value="ECO:0007669"/>
    <property type="project" value="RHEA"/>
</dbReference>
<dbReference type="GO" id="GO:0004674">
    <property type="term" value="F:protein serine/threonine kinase activity"/>
    <property type="evidence" value="ECO:0007669"/>
    <property type="project" value="UniProtKB-KW"/>
</dbReference>
<dbReference type="GO" id="GO:0007165">
    <property type="term" value="P:signal transduction"/>
    <property type="evidence" value="ECO:0000318"/>
    <property type="project" value="GO_Central"/>
</dbReference>
<dbReference type="CDD" id="cd13999">
    <property type="entry name" value="STKc_MAP3K-like"/>
    <property type="match status" value="1"/>
</dbReference>
<dbReference type="Gene3D" id="3.30.200.20">
    <property type="entry name" value="Phosphorylase Kinase, domain 1"/>
    <property type="match status" value="1"/>
</dbReference>
<dbReference type="Gene3D" id="1.10.510.10">
    <property type="entry name" value="Transferase(Phosphotransferase) domain 1"/>
    <property type="match status" value="1"/>
</dbReference>
<dbReference type="InterPro" id="IPR011009">
    <property type="entry name" value="Kinase-like_dom_sf"/>
</dbReference>
<dbReference type="InterPro" id="IPR000719">
    <property type="entry name" value="Prot_kinase_dom"/>
</dbReference>
<dbReference type="InterPro" id="IPR017441">
    <property type="entry name" value="Protein_kinase_ATP_BS"/>
</dbReference>
<dbReference type="InterPro" id="IPR016137">
    <property type="entry name" value="RGS"/>
</dbReference>
<dbReference type="InterPro" id="IPR036305">
    <property type="entry name" value="RGS_sf"/>
</dbReference>
<dbReference type="InterPro" id="IPR008271">
    <property type="entry name" value="Ser/Thr_kinase_AS"/>
</dbReference>
<dbReference type="InterPro" id="IPR051681">
    <property type="entry name" value="Ser/Thr_Kinases-Pseudokinases"/>
</dbReference>
<dbReference type="PANTHER" id="PTHR44329:SF288">
    <property type="entry name" value="MITOGEN-ACTIVATED PROTEIN KINASE KINASE KINASE 20"/>
    <property type="match status" value="1"/>
</dbReference>
<dbReference type="PANTHER" id="PTHR44329">
    <property type="entry name" value="SERINE/THREONINE-PROTEIN KINASE TNNI3K-RELATED"/>
    <property type="match status" value="1"/>
</dbReference>
<dbReference type="Pfam" id="PF00069">
    <property type="entry name" value="Pkinase"/>
    <property type="match status" value="1"/>
</dbReference>
<dbReference type="SMART" id="SM00220">
    <property type="entry name" value="S_TKc"/>
    <property type="match status" value="1"/>
</dbReference>
<dbReference type="SUPFAM" id="SSF81995">
    <property type="entry name" value="beta-sandwich domain of Sec23/24"/>
    <property type="match status" value="1"/>
</dbReference>
<dbReference type="SUPFAM" id="SSF56112">
    <property type="entry name" value="Protein kinase-like (PK-like)"/>
    <property type="match status" value="1"/>
</dbReference>
<dbReference type="SUPFAM" id="SSF48097">
    <property type="entry name" value="Regulator of G-protein signaling, RGS"/>
    <property type="match status" value="1"/>
</dbReference>
<dbReference type="PROSITE" id="PS00107">
    <property type="entry name" value="PROTEIN_KINASE_ATP"/>
    <property type="match status" value="1"/>
</dbReference>
<dbReference type="PROSITE" id="PS50011">
    <property type="entry name" value="PROTEIN_KINASE_DOM"/>
    <property type="match status" value="1"/>
</dbReference>
<dbReference type="PROSITE" id="PS00108">
    <property type="entry name" value="PROTEIN_KINASE_ST"/>
    <property type="match status" value="1"/>
</dbReference>
<dbReference type="PROSITE" id="PS50132">
    <property type="entry name" value="RGS"/>
    <property type="match status" value="1"/>
</dbReference>
<keyword id="KW-0067">ATP-binding</keyword>
<keyword id="KW-0418">Kinase</keyword>
<keyword id="KW-0547">Nucleotide-binding</keyword>
<keyword id="KW-1185">Reference proteome</keyword>
<keyword id="KW-0723">Serine/threonine-protein kinase</keyword>
<keyword id="KW-0808">Transferase</keyword>
<accession>Q55GG4</accession>
<sequence length="2230" mass="246462">MEPNNNISNSNNGGSGIDGDGKEDSIYSYGYSSTTNSYNGVGNNSNLDKDDLDVFSLLDSITNTSYLLKPPPKIQKPPSPFSYPIELDQEEASLKEQELKLLELRLELQNTIIANSLINNNNNSNNNNNDNNNNNNNNNNNNNNNNNIQLNNSSLTPPIINISLPTTPSTVNLTPKKPNLYINTKLPNENDDIIITPIVPLSGTITPPIPVDSPISFAETEQIIVVPQLQLLDEIINTTDNIGGGAAEKLQNIDPEIIIKLETEIKISSDEKENKEGGQVENKEEKEKLDQKLENENENEKVKEKEKEDEKEEQQVKVKEKEKEKENENEKNHNDKNDDDDDDEDNEKDKISKTTVSVSIKVSNENTPIINATDSSSNSINSSSNNSIATTPGRLSSSGLINHKKYDEFIEPTFFLSTASIGLNRLKSSNGASGSNSGNVSPSGPTPILSTLFQKNNSKQDLLKNSSENSFCNNNNNNNNNNNNNNNNNNNNNNNNNNSNNSNINNNNNNNSSNNNNNNNNNNNNNNNNNNNNNNNNNNNNNNNNNNNNNNNNNINGFSTIKSSSSSSPTNSPSSSLNIMNFFNTGSISSIVGSGSSSLGKGSSKKIKDSYSNNNNNSSTADLSEQVLLANMDNPFSSIPGRIKKNLDRRGATIANPQQLTSLIKSGNTAKLQKFFGLEKEDLLAVNIIQQQQLQLQHQHQQHQQAHQHQHQQQQQHQQQLKSRSNTTNTPLMMFSVSENNSPNNSPPVSPPSSPMLSPLSSSPPSWISGTSPARKLRGRAATGSLLSGSSSNNNTTTTTTTTTSNSNSLSNNNRSNSFVDSRPFLPPVKTMPNIGGGQYNTTPPLLPSQTGDHVVKTPKDYHRKPKLLIAKLLKNNSLYMEKEKEKEKEKEKNESSKLDIKNFAASGGQLSLSSNQIISNNSNSSSNNNNNNNNNNNNNNNNNNGLSNNIVINNSNNNSNNNSASSSPTSSNSGYLNESNFILSSSSKESLSALMKDRIGYDLFKIFCKELVNKQGTNLVNILLFIEEVESFQSGIFNTDQLVLEETDRIFYKFILESTAAEFDINIPKRYFYQINHHIKEKIPNKYVFEKVLKALKDETSADAFKRFCILHSTTNGTSAPTNSTTIHSPSLAVPLSSSSWNGLSKETSNSLVNNNTTPNTSTASPSITASSSSTSINNNTTTATATTVTTPVIVHQRHHSSTVSGHYGGHRNHLQHVKLSHSNSPSPSSSPPDSYTSNQPLIFNGSPLGVSGSDYSFNKFGNNSLVPPNLNISQASGGGSGNSNNNNNNELIINIKGLSPPTSHISSPPLSPRLSMIRPHFTNGSMKSSLFQQQLQPTGSINSSPINNHQVSGGCGGDQTTELQTETLDDFIPHGVAFGFKRGACKPPCDCLTYQSEGDKGGACLNCGHYPALHKNLGKISNSNNSIDIDSLQQQQQHQQIHHQSNLLPNTLLNLSNVTMASGALSPSTLNQQQHQILQQQQQQQQQQQQQQQQQQQQQQQQQQQQQQQHQQHQQFQPNPSPSPPLTPSSNSIIQPSQQQQPQQIVNTLINSSSDNTLVLPTIPNITNTPPSPTQTLPLPSSSSSSLVIPNSNINSSPTSPSLSYNNNSNSNSNAGVGSIPLSFNEIVNSNNSPNINNNGIINTSSNNNINNTNASINGSANQLFNNPMTFSGNEIVLPPIVQSSGGSLFTDSPLSSPKRIHFHNGIGNGDLLNNRAVLHSTVSNNNNINSNNNNNNNNNNNNNNNNNNNNNNNNNNNNNNNSNNNNGNDSLAILQKLIANGGSLKNAIYSLNNRSNSSNNLMSNNNINNSNIPNRLLNNRSNSSNSLMSSNNKNNYNNYNSNNNHIYSNEELTEIHQQQQLQQQQQQQQQLQQQQQQQQQQQQQQQQQQQQQQQQQQQQQQENNTTTTTTTTSNRPFRSNNPTISQELDTKVLMNFNNWAIDGEEIVFLNKLGEGTSAKVYRATWRNQEVAVKVLRSEPESQKLLDFLKELEIMSSLRSPHVVYFYGMVLDPKICMIMEYCSNQTLYHLMHLQMNFTWDWVFKFAIEMVRGVNCLHSWKPVIVHRDLKSLNLLVSDNWTIKVADFGLSRFATAKSASNRTTRGTFAYCAPEVFYGIHTTKGDIFSIGIILWELAVRCIKSKYEKPFSEFKHIQYDFQILVQTSKFNLRPTIPQNCPEAFSNLISNCWESSPDNRPSCPEILDSLLDMEKKYTENKRKWDKIREKPKK</sequence>
<name>Y9847_DICDI</name>
<feature type="chain" id="PRO_0000355158" description="Probable serine/threonine-protein kinase DDB_G0267686">
    <location>
        <begin position="1"/>
        <end position="2230"/>
    </location>
</feature>
<feature type="domain" description="RGS" evidence="2">
    <location>
        <begin position="991"/>
        <end position="1119"/>
    </location>
</feature>
<feature type="domain" description="Protein kinase" evidence="1">
    <location>
        <begin position="1949"/>
        <end position="2208"/>
    </location>
</feature>
<feature type="region of interest" description="Disordered" evidence="4">
    <location>
        <begin position="1"/>
        <end position="22"/>
    </location>
</feature>
<feature type="region of interest" description="Disordered" evidence="4">
    <location>
        <begin position="121"/>
        <end position="152"/>
    </location>
</feature>
<feature type="region of interest" description="Disordered" evidence="4">
    <location>
        <begin position="270"/>
        <end position="352"/>
    </location>
</feature>
<feature type="region of interest" description="Disordered" evidence="4">
    <location>
        <begin position="368"/>
        <end position="397"/>
    </location>
</feature>
<feature type="region of interest" description="Disordered" evidence="4">
    <location>
        <begin position="430"/>
        <end position="451"/>
    </location>
</feature>
<feature type="region of interest" description="Disordered" evidence="4">
    <location>
        <begin position="464"/>
        <end position="574"/>
    </location>
</feature>
<feature type="region of interest" description="Disordered" evidence="4">
    <location>
        <begin position="593"/>
        <end position="620"/>
    </location>
</feature>
<feature type="region of interest" description="Disordered" evidence="4">
    <location>
        <begin position="699"/>
        <end position="849"/>
    </location>
</feature>
<feature type="region of interest" description="Disordered" evidence="4">
    <location>
        <begin position="915"/>
        <end position="974"/>
    </location>
</feature>
<feature type="region of interest" description="Disordered" evidence="4">
    <location>
        <begin position="1146"/>
        <end position="1181"/>
    </location>
</feature>
<feature type="region of interest" description="Disordered" evidence="4">
    <location>
        <begin position="1220"/>
        <end position="1243"/>
    </location>
</feature>
<feature type="region of interest" description="Disordered" evidence="4">
    <location>
        <begin position="1300"/>
        <end position="1362"/>
    </location>
</feature>
<feature type="region of interest" description="Disordered" evidence="4">
    <location>
        <begin position="1506"/>
        <end position="1546"/>
    </location>
</feature>
<feature type="region of interest" description="Disordered" evidence="4">
    <location>
        <begin position="1563"/>
        <end position="1611"/>
    </location>
</feature>
<feature type="region of interest" description="Disordered" evidence="4">
    <location>
        <begin position="1725"/>
        <end position="1771"/>
    </location>
</feature>
<feature type="region of interest" description="Disordered" evidence="4">
    <location>
        <begin position="1802"/>
        <end position="1848"/>
    </location>
</feature>
<feature type="region of interest" description="Disordered" evidence="4">
    <location>
        <begin position="1905"/>
        <end position="1929"/>
    </location>
</feature>
<feature type="compositionally biased region" description="Low complexity" evidence="4">
    <location>
        <begin position="1"/>
        <end position="12"/>
    </location>
</feature>
<feature type="compositionally biased region" description="Basic and acidic residues" evidence="4">
    <location>
        <begin position="270"/>
        <end position="336"/>
    </location>
</feature>
<feature type="compositionally biased region" description="Acidic residues" evidence="4">
    <location>
        <begin position="337"/>
        <end position="346"/>
    </location>
</feature>
<feature type="compositionally biased region" description="Low complexity" evidence="4">
    <location>
        <begin position="375"/>
        <end position="388"/>
    </location>
</feature>
<feature type="compositionally biased region" description="Low complexity" evidence="4">
    <location>
        <begin position="430"/>
        <end position="447"/>
    </location>
</feature>
<feature type="compositionally biased region" description="Low complexity" evidence="4">
    <location>
        <begin position="473"/>
        <end position="574"/>
    </location>
</feature>
<feature type="compositionally biased region" description="Low complexity" evidence="4">
    <location>
        <begin position="593"/>
        <end position="602"/>
    </location>
</feature>
<feature type="compositionally biased region" description="Low complexity" evidence="4">
    <location>
        <begin position="610"/>
        <end position="619"/>
    </location>
</feature>
<feature type="compositionally biased region" description="Low complexity" evidence="4">
    <location>
        <begin position="699"/>
        <end position="721"/>
    </location>
</feature>
<feature type="compositionally biased region" description="Polar residues" evidence="4">
    <location>
        <begin position="722"/>
        <end position="731"/>
    </location>
</feature>
<feature type="compositionally biased region" description="Pro residues" evidence="4">
    <location>
        <begin position="745"/>
        <end position="754"/>
    </location>
</feature>
<feature type="compositionally biased region" description="Low complexity" evidence="4">
    <location>
        <begin position="755"/>
        <end position="766"/>
    </location>
</feature>
<feature type="compositionally biased region" description="Low complexity" evidence="4">
    <location>
        <begin position="783"/>
        <end position="818"/>
    </location>
</feature>
<feature type="compositionally biased region" description="Polar residues" evidence="4">
    <location>
        <begin position="840"/>
        <end position="849"/>
    </location>
</feature>
<feature type="compositionally biased region" description="Low complexity" evidence="4">
    <location>
        <begin position="1149"/>
        <end position="1181"/>
    </location>
</feature>
<feature type="compositionally biased region" description="Low complexity" evidence="4">
    <location>
        <begin position="1222"/>
        <end position="1239"/>
    </location>
</feature>
<feature type="compositionally biased region" description="Polar residues" evidence="4">
    <location>
        <begin position="1324"/>
        <end position="1353"/>
    </location>
</feature>
<feature type="compositionally biased region" description="Low complexity" evidence="4">
    <location>
        <begin position="1506"/>
        <end position="1520"/>
    </location>
</feature>
<feature type="compositionally biased region" description="Low complexity" evidence="4">
    <location>
        <begin position="1530"/>
        <end position="1546"/>
    </location>
</feature>
<feature type="compositionally biased region" description="Low complexity" evidence="4">
    <location>
        <begin position="1726"/>
        <end position="1769"/>
    </location>
</feature>
<feature type="compositionally biased region" description="Low complexity" evidence="4">
    <location>
        <begin position="1905"/>
        <end position="1915"/>
    </location>
</feature>
<feature type="compositionally biased region" description="Polar residues" evidence="4">
    <location>
        <begin position="1916"/>
        <end position="1929"/>
    </location>
</feature>
<feature type="active site" description="Proton acceptor" evidence="1 3">
    <location>
        <position position="2069"/>
    </location>
</feature>
<feature type="binding site" evidence="1">
    <location>
        <begin position="1955"/>
        <end position="1963"/>
    </location>
    <ligand>
        <name>ATP</name>
        <dbReference type="ChEBI" id="CHEBI:30616"/>
    </ligand>
</feature>
<feature type="binding site" evidence="1">
    <location>
        <position position="1976"/>
    </location>
    <ligand>
        <name>ATP</name>
        <dbReference type="ChEBI" id="CHEBI:30616"/>
    </ligand>
</feature>
<reference key="1">
    <citation type="journal article" date="2005" name="Nature">
        <title>The genome of the social amoeba Dictyostelium discoideum.</title>
        <authorList>
            <person name="Eichinger L."/>
            <person name="Pachebat J.A."/>
            <person name="Gloeckner G."/>
            <person name="Rajandream M.A."/>
            <person name="Sucgang R."/>
            <person name="Berriman M."/>
            <person name="Song J."/>
            <person name="Olsen R."/>
            <person name="Szafranski K."/>
            <person name="Xu Q."/>
            <person name="Tunggal B."/>
            <person name="Kummerfeld S."/>
            <person name="Madera M."/>
            <person name="Konfortov B.A."/>
            <person name="Rivero F."/>
            <person name="Bankier A.T."/>
            <person name="Lehmann R."/>
            <person name="Hamlin N."/>
            <person name="Davies R."/>
            <person name="Gaudet P."/>
            <person name="Fey P."/>
            <person name="Pilcher K."/>
            <person name="Chen G."/>
            <person name="Saunders D."/>
            <person name="Sodergren E.J."/>
            <person name="Davis P."/>
            <person name="Kerhornou A."/>
            <person name="Nie X."/>
            <person name="Hall N."/>
            <person name="Anjard C."/>
            <person name="Hemphill L."/>
            <person name="Bason N."/>
            <person name="Farbrother P."/>
            <person name="Desany B."/>
            <person name="Just E."/>
            <person name="Morio T."/>
            <person name="Rost R."/>
            <person name="Churcher C.M."/>
            <person name="Cooper J."/>
            <person name="Haydock S."/>
            <person name="van Driessche N."/>
            <person name="Cronin A."/>
            <person name="Goodhead I."/>
            <person name="Muzny D.M."/>
            <person name="Mourier T."/>
            <person name="Pain A."/>
            <person name="Lu M."/>
            <person name="Harper D."/>
            <person name="Lindsay R."/>
            <person name="Hauser H."/>
            <person name="James K.D."/>
            <person name="Quiles M."/>
            <person name="Madan Babu M."/>
            <person name="Saito T."/>
            <person name="Buchrieser C."/>
            <person name="Wardroper A."/>
            <person name="Felder M."/>
            <person name="Thangavelu M."/>
            <person name="Johnson D."/>
            <person name="Knights A."/>
            <person name="Loulseged H."/>
            <person name="Mungall K.L."/>
            <person name="Oliver K."/>
            <person name="Price C."/>
            <person name="Quail M.A."/>
            <person name="Urushihara H."/>
            <person name="Hernandez J."/>
            <person name="Rabbinowitsch E."/>
            <person name="Steffen D."/>
            <person name="Sanders M."/>
            <person name="Ma J."/>
            <person name="Kohara Y."/>
            <person name="Sharp S."/>
            <person name="Simmonds M.N."/>
            <person name="Spiegler S."/>
            <person name="Tivey A."/>
            <person name="Sugano S."/>
            <person name="White B."/>
            <person name="Walker D."/>
            <person name="Woodward J.R."/>
            <person name="Winckler T."/>
            <person name="Tanaka Y."/>
            <person name="Shaulsky G."/>
            <person name="Schleicher M."/>
            <person name="Weinstock G.M."/>
            <person name="Rosenthal A."/>
            <person name="Cox E.C."/>
            <person name="Chisholm R.L."/>
            <person name="Gibbs R.A."/>
            <person name="Loomis W.F."/>
            <person name="Platzer M."/>
            <person name="Kay R.R."/>
            <person name="Williams J.G."/>
            <person name="Dear P.H."/>
            <person name="Noegel A.A."/>
            <person name="Barrell B.G."/>
            <person name="Kuspa A."/>
        </authorList>
    </citation>
    <scope>NUCLEOTIDE SEQUENCE [LARGE SCALE GENOMIC DNA]</scope>
    <source>
        <strain>AX4</strain>
    </source>
</reference>
<organism>
    <name type="scientific">Dictyostelium discoideum</name>
    <name type="common">Social amoeba</name>
    <dbReference type="NCBI Taxonomy" id="44689"/>
    <lineage>
        <taxon>Eukaryota</taxon>
        <taxon>Amoebozoa</taxon>
        <taxon>Evosea</taxon>
        <taxon>Eumycetozoa</taxon>
        <taxon>Dictyostelia</taxon>
        <taxon>Dictyosteliales</taxon>
        <taxon>Dictyosteliaceae</taxon>
        <taxon>Dictyostelium</taxon>
    </lineage>
</organism>